<keyword id="KW-0119">Carbohydrate metabolism</keyword>
<keyword id="KW-0963">Cytoplasm</keyword>
<keyword id="KW-0903">Direct protein sequencing</keyword>
<keyword id="KW-0326">Glycosidase</keyword>
<keyword id="KW-0378">Hydrolase</keyword>
<gene>
    <name evidence="4" type="primary">abfA</name>
</gene>
<name>IABF_STRLI</name>
<dbReference type="EC" id="3.2.1.55" evidence="3"/>
<dbReference type="EMBL" id="U04630">
    <property type="protein sequence ID" value="AAA61708.1"/>
    <property type="molecule type" value="Genomic_DNA"/>
</dbReference>
<dbReference type="PIR" id="S55274">
    <property type="entry name" value="S55274"/>
</dbReference>
<dbReference type="SMR" id="P53627"/>
<dbReference type="CAZy" id="GH51">
    <property type="family name" value="Glycoside Hydrolase Family 51"/>
</dbReference>
<dbReference type="BRENDA" id="3.2.1.55">
    <property type="organism ID" value="6052"/>
</dbReference>
<dbReference type="UniPathway" id="UPA00667"/>
<dbReference type="GO" id="GO:0005737">
    <property type="term" value="C:cytoplasm"/>
    <property type="evidence" value="ECO:0007669"/>
    <property type="project" value="UniProtKB-SubCell"/>
</dbReference>
<dbReference type="GO" id="GO:0046556">
    <property type="term" value="F:alpha-L-arabinofuranosidase activity"/>
    <property type="evidence" value="ECO:0007669"/>
    <property type="project" value="UniProtKB-EC"/>
</dbReference>
<dbReference type="GO" id="GO:0031222">
    <property type="term" value="P:arabinan catabolic process"/>
    <property type="evidence" value="ECO:0007669"/>
    <property type="project" value="UniProtKB-UniPathway"/>
</dbReference>
<dbReference type="GO" id="GO:0046373">
    <property type="term" value="P:L-arabinose metabolic process"/>
    <property type="evidence" value="ECO:0007669"/>
    <property type="project" value="InterPro"/>
</dbReference>
<dbReference type="Gene3D" id="3.20.20.80">
    <property type="entry name" value="Glycosidases"/>
    <property type="match status" value="1"/>
</dbReference>
<dbReference type="Gene3D" id="2.60.40.1180">
    <property type="entry name" value="Golgi alpha-mannosidase II"/>
    <property type="match status" value="1"/>
</dbReference>
<dbReference type="InterPro" id="IPR010720">
    <property type="entry name" value="Alpha-L-AF_C"/>
</dbReference>
<dbReference type="InterPro" id="IPR013780">
    <property type="entry name" value="Glyco_hydro_b"/>
</dbReference>
<dbReference type="InterPro" id="IPR017853">
    <property type="entry name" value="Glycoside_hydrolase_SF"/>
</dbReference>
<dbReference type="PANTHER" id="PTHR43576:SF3">
    <property type="entry name" value="ALPHA-L-ARABINOFURANOSIDASE C"/>
    <property type="match status" value="1"/>
</dbReference>
<dbReference type="PANTHER" id="PTHR43576">
    <property type="entry name" value="ALPHA-L-ARABINOFURANOSIDASE C-RELATED"/>
    <property type="match status" value="1"/>
</dbReference>
<dbReference type="Pfam" id="PF06964">
    <property type="entry name" value="Alpha-L-AF_C"/>
    <property type="match status" value="1"/>
</dbReference>
<dbReference type="SMART" id="SM00813">
    <property type="entry name" value="Alpha-L-AF_C"/>
    <property type="match status" value="1"/>
</dbReference>
<dbReference type="SUPFAM" id="SSF51445">
    <property type="entry name" value="(Trans)glycosidases"/>
    <property type="match status" value="1"/>
</dbReference>
<dbReference type="SUPFAM" id="SSF51011">
    <property type="entry name" value="Glycosyl hydrolase domain"/>
    <property type="match status" value="1"/>
</dbReference>
<proteinExistence type="evidence at protein level"/>
<accession>P53627</accession>
<protein>
    <recommendedName>
        <fullName>Intracellular exo-alpha-(1-&gt;5)-L-arabinofuranosidase</fullName>
        <shortName>ABF</shortName>
        <ecNumber evidence="3">3.2.1.55</ecNumber>
    </recommendedName>
    <alternativeName>
        <fullName>Alpha-L-AF</fullName>
    </alternativeName>
    <alternativeName>
        <fullName>Arabinoxylan arabinofuranohydrolase</fullName>
    </alternativeName>
    <alternativeName>
        <fullName>Intracellular arabinan exo-alpha-(1-&gt;5)-L-arabinosidase</fullName>
        <shortName>Arabinosidase</shortName>
    </alternativeName>
</protein>
<evidence type="ECO:0000250" key="1">
    <source>
        <dbReference type="UniProtKB" id="Q9XBQ3"/>
    </source>
</evidence>
<evidence type="ECO:0000256" key="2">
    <source>
        <dbReference type="SAM" id="MobiDB-lite"/>
    </source>
</evidence>
<evidence type="ECO:0000269" key="3">
    <source>
    </source>
</evidence>
<evidence type="ECO:0000303" key="4">
    <source>
    </source>
</evidence>
<evidence type="ECO:0000305" key="5"/>
<evidence type="ECO:0000305" key="6">
    <source>
    </source>
</evidence>
<reference key="1">
    <citation type="journal article" date="1994" name="Biochem. J.">
        <title>Purification and characterization of an alpha-L-arabinofuranosidase from Streptomyces lividans 66 and DNA sequence of the gene (abfA).</title>
        <authorList>
            <person name="Manin C."/>
            <person name="Shareek F."/>
            <person name="Morosoli R."/>
            <person name="Kluepfel D."/>
        </authorList>
    </citation>
    <scope>NUCLEOTIDE SEQUENCE [GENOMIC DNA]</scope>
    <scope>PROTEIN SEQUENCE OF 1-23</scope>
    <scope>FUNCTION</scope>
    <scope>CATALYTIC ACTIVITY</scope>
    <scope>BIOPHYSICOCHEMICAL PROPERTIES</scope>
    <scope>SUBCELLULAR LOCATION</scope>
    <scope>SUBSTRATE SPECIFICITY</scope>
    <scope>SUBUNIT</scope>
    <source>
        <strain>66 / 1326</strain>
    </source>
</reference>
<sequence length="662" mass="72497">MRTARFTLDPAFTVGAVNPRLFGSFVEHLGRCVYTGVFEPGHPTADAEGLRQDVLELVRELGVTAVRYPGGNFVSGYKWEDSVGPVEDRPRRLDLAWRSTETNRFGLSEYIAFLKKIGPQAEPMMAVNLGTRGVAEALELQEYANHPSGTALSDLRAEHGDKDPFGIRLWCLGNEMDGPWQTGHKTAEEYGRVAAETARAMRQIDPDVELVACGSSGQSMETFAEWEATVLKETYDLVDHISLHAYYEPHDGDVDSFLASAVDMESFIENVVATCDHVGARLKSKKKINLSFDEWNVWYMTKTQAEVSALDWPEAPRLLEDNYSVMDAVVFGSLLIALLRHADRVTVACLAQLVNVIAPIMTEPGGPAWRQTTFFPFSQASKYGRGEVLDVRVDSPTYDTAKYGEADLLHATAVVRARRSVTVFAVNRSRTGALPLEVALSGLELTEVVEHSALADADPDARNTLAEPERVVPHPVDGTSLRDGRLTAALEPLSWNSIRCADPAPGQPPRRPGEGTGFTGTPPAAPPSSSSAPRPDPTARRSPDRTARARVLAAARVRRMPFGRTKVCGAPVRPPTYAPRFQPFRKTWTRWAPAPRSGSPSRRSPTEASIPGGTSSRNVVRYQVTPWRRSPPGSAPGTPAPTRRRRTRAGASRGAPRTARRC</sequence>
<comment type="function">
    <text evidence="3">Involved in the degradation of arabinan and is a key enzyme in the complete degradation of the plant cell wall. Catalyzes the cleavage of terminal alpha-(1-&gt;5)-arabinofuranosyl bonds in different hemicellulosic homopolysaccharides (arabino-oligoxylosides, branched and debranched arabinans). It acts rapidly on the short-chain arabino-oligoxylosides from digestion of xylan with xylanases. It hydrolyzes slowly arabinan and arabinoxylan from wheat and rye flour.</text>
</comment>
<comment type="catalytic activity">
    <reaction evidence="3">
        <text>Hydrolysis of terminal non-reducing alpha-L-arabinofuranoside residues in alpha-L-arabinosides.</text>
        <dbReference type="EC" id="3.2.1.55"/>
    </reaction>
</comment>
<comment type="biophysicochemical properties">
    <kinetics>
        <KM evidence="3">0.6 mM for p-nitrophenyl alpha-L-arabinofuranoside (pNP-Araf) (at 60 degrees Celsius and at pH 6)</KM>
        <Vmax evidence="3">180.0 umol/min/mg enzyme (at 60 degrees Celsius and at pH 6)</Vmax>
    </kinetics>
    <phDependence>
        <text evidence="3">Optimum pH is 6.0.</text>
    </phDependence>
    <temperatureDependence>
        <text evidence="3">Optimum temperature is 60 degrees Celsius.</text>
    </temperatureDependence>
</comment>
<comment type="pathway">
    <text>Glycan metabolism; L-arabinan degradation.</text>
</comment>
<comment type="subunit">
    <text evidence="6">Homohexamer; trimer of dimers.</text>
</comment>
<comment type="subcellular location">
    <subcellularLocation>
        <location evidence="3">Cytoplasm</location>
    </subcellularLocation>
</comment>
<comment type="similarity">
    <text evidence="5">Belongs to the glycosyl hydrolase 51 family.</text>
</comment>
<organism>
    <name type="scientific">Streptomyces lividans</name>
    <dbReference type="NCBI Taxonomy" id="1916"/>
    <lineage>
        <taxon>Bacteria</taxon>
        <taxon>Bacillati</taxon>
        <taxon>Actinomycetota</taxon>
        <taxon>Actinomycetes</taxon>
        <taxon>Kitasatosporales</taxon>
        <taxon>Streptomycetaceae</taxon>
        <taxon>Streptomyces</taxon>
    </lineage>
</organism>
<feature type="chain" id="PRO_0000057704" description="Intracellular exo-alpha-(1-&gt;5)-L-arabinofuranosidase">
    <location>
        <begin position="1"/>
        <end position="662"/>
    </location>
</feature>
<feature type="region of interest" description="Disordered" evidence="2">
    <location>
        <begin position="454"/>
        <end position="483"/>
    </location>
</feature>
<feature type="region of interest" description="Disordered" evidence="2">
    <location>
        <begin position="497"/>
        <end position="548"/>
    </location>
</feature>
<feature type="region of interest" description="Disordered" evidence="2">
    <location>
        <begin position="588"/>
        <end position="662"/>
    </location>
</feature>
<feature type="compositionally biased region" description="Low complexity" evidence="2">
    <location>
        <begin position="519"/>
        <end position="533"/>
    </location>
</feature>
<feature type="compositionally biased region" description="Basic and acidic residues" evidence="2">
    <location>
        <begin position="537"/>
        <end position="547"/>
    </location>
</feature>
<feature type="compositionally biased region" description="Low complexity" evidence="2">
    <location>
        <begin position="590"/>
        <end position="603"/>
    </location>
</feature>
<feature type="compositionally biased region" description="Low complexity" evidence="2">
    <location>
        <begin position="628"/>
        <end position="641"/>
    </location>
</feature>
<feature type="compositionally biased region" description="Low complexity" evidence="2">
    <location>
        <begin position="649"/>
        <end position="662"/>
    </location>
</feature>
<feature type="active site" description="Proton donor/acceptor" evidence="1">
    <location>
        <position position="175"/>
    </location>
</feature>
<feature type="active site" description="Nucleophile" evidence="1">
    <location>
        <position position="294"/>
    </location>
</feature>
<feature type="binding site" evidence="1">
    <location>
        <position position="27"/>
    </location>
    <ligand>
        <name>alpha-L-arabinofuranose</name>
        <dbReference type="ChEBI" id="CHEBI:28772"/>
    </ligand>
</feature>
<feature type="binding site" evidence="1">
    <location>
        <position position="72"/>
    </location>
    <ligand>
        <name>alpha-L-arabinofuranose</name>
        <dbReference type="ChEBI" id="CHEBI:28772"/>
    </ligand>
</feature>
<feature type="binding site" evidence="1">
    <location>
        <position position="174"/>
    </location>
    <ligand>
        <name>alpha-L-arabinofuranose</name>
        <dbReference type="ChEBI" id="CHEBI:28772"/>
    </ligand>
</feature>
<feature type="binding site" evidence="1">
    <location>
        <position position="246"/>
    </location>
    <ligand>
        <name>alpha-L-arabinofuranose</name>
        <dbReference type="ChEBI" id="CHEBI:28772"/>
    </ligand>
</feature>
<feature type="binding site" description="covalent" evidence="1">
    <location>
        <position position="294"/>
    </location>
    <ligand>
        <name>alpha-L-arabinofuranose</name>
        <dbReference type="ChEBI" id="CHEBI:28772"/>
    </ligand>
</feature>
<feature type="binding site" evidence="1">
    <location>
        <position position="352"/>
    </location>
    <ligand>
        <name>alpha-L-arabinofuranose</name>
        <dbReference type="ChEBI" id="CHEBI:28772"/>
    </ligand>
</feature>
<feature type="site" description="Important for substrate recognition" evidence="1">
    <location>
        <position position="298"/>
    </location>
</feature>
<feature type="site" description="Important for substrate recognition" evidence="1">
    <location>
        <position position="352"/>
    </location>
</feature>